<sequence>MITNKVKTLILVNLGGPRTPSEIEVFLRDLFSDPFVFDLPLPEFLRLRLARFIAKKRAPKVQKSYESMGFGGGSPLVEETAKQAHALELALNERSSEQWNVKVAMACGYPNMRDIEFGKPNQDTVYLPLYPQFSRSTVLSTLAILETKFGECPVGSGGYVPHFGLDPNFHSISAKFIYEFFTNQLPKDQYLHYPEEKPNCDWRNLDLVFSAHGVPMRLIHKGDRYMEEVELSVKGIADELSKFGFNGGVHISYQSKVGPAKWTEPSTIQMISSLAKQGKHIAVYPISFVSDHLETLEEIGEQFKDLTWEMGGKSFVRIPALGIYPSFIQFLAEKVMHSDRKIQHCICREKGGESLQHCRFKD</sequence>
<dbReference type="EC" id="4.98.1.1" evidence="1"/>
<dbReference type="EMBL" id="CP000786">
    <property type="protein sequence ID" value="ABZ97280.1"/>
    <property type="molecule type" value="Genomic_DNA"/>
</dbReference>
<dbReference type="RefSeq" id="WP_012388161.1">
    <property type="nucleotide sequence ID" value="NC_010602.1"/>
</dbReference>
<dbReference type="SMR" id="B0SNJ9"/>
<dbReference type="STRING" id="456481.LEPBI_I1164"/>
<dbReference type="KEGG" id="lbi:LEPBI_I1164"/>
<dbReference type="HOGENOM" id="CLU_018884_4_1_12"/>
<dbReference type="OrthoDB" id="9809741at2"/>
<dbReference type="BioCyc" id="LBIF456481:LEPBI_RS05710-MONOMER"/>
<dbReference type="UniPathway" id="UPA00252">
    <property type="reaction ID" value="UER00325"/>
</dbReference>
<dbReference type="Proteomes" id="UP000001847">
    <property type="component" value="Chromosome I"/>
</dbReference>
<dbReference type="GO" id="GO:0005737">
    <property type="term" value="C:cytoplasm"/>
    <property type="evidence" value="ECO:0007669"/>
    <property type="project" value="UniProtKB-SubCell"/>
</dbReference>
<dbReference type="GO" id="GO:0004325">
    <property type="term" value="F:ferrochelatase activity"/>
    <property type="evidence" value="ECO:0007669"/>
    <property type="project" value="UniProtKB-UniRule"/>
</dbReference>
<dbReference type="GO" id="GO:0046872">
    <property type="term" value="F:metal ion binding"/>
    <property type="evidence" value="ECO:0007669"/>
    <property type="project" value="UniProtKB-KW"/>
</dbReference>
<dbReference type="GO" id="GO:0006783">
    <property type="term" value="P:heme biosynthetic process"/>
    <property type="evidence" value="ECO:0007669"/>
    <property type="project" value="UniProtKB-UniRule"/>
</dbReference>
<dbReference type="CDD" id="cd00419">
    <property type="entry name" value="Ferrochelatase_C"/>
    <property type="match status" value="1"/>
</dbReference>
<dbReference type="CDD" id="cd03411">
    <property type="entry name" value="Ferrochelatase_N"/>
    <property type="match status" value="1"/>
</dbReference>
<dbReference type="Gene3D" id="3.40.50.1400">
    <property type="match status" value="2"/>
</dbReference>
<dbReference type="HAMAP" id="MF_00323">
    <property type="entry name" value="Ferrochelatase"/>
    <property type="match status" value="1"/>
</dbReference>
<dbReference type="InterPro" id="IPR001015">
    <property type="entry name" value="Ferrochelatase"/>
</dbReference>
<dbReference type="InterPro" id="IPR019772">
    <property type="entry name" value="Ferrochelatase_AS"/>
</dbReference>
<dbReference type="InterPro" id="IPR033644">
    <property type="entry name" value="Ferrochelatase_C"/>
</dbReference>
<dbReference type="InterPro" id="IPR033659">
    <property type="entry name" value="Ferrochelatase_N"/>
</dbReference>
<dbReference type="NCBIfam" id="TIGR00109">
    <property type="entry name" value="hemH"/>
    <property type="match status" value="1"/>
</dbReference>
<dbReference type="PANTHER" id="PTHR11108">
    <property type="entry name" value="FERROCHELATASE"/>
    <property type="match status" value="1"/>
</dbReference>
<dbReference type="PANTHER" id="PTHR11108:SF1">
    <property type="entry name" value="FERROCHELATASE, MITOCHONDRIAL"/>
    <property type="match status" value="1"/>
</dbReference>
<dbReference type="Pfam" id="PF00762">
    <property type="entry name" value="Ferrochelatase"/>
    <property type="match status" value="1"/>
</dbReference>
<dbReference type="SUPFAM" id="SSF53800">
    <property type="entry name" value="Chelatase"/>
    <property type="match status" value="1"/>
</dbReference>
<dbReference type="PROSITE" id="PS00534">
    <property type="entry name" value="FERROCHELATASE"/>
    <property type="match status" value="1"/>
</dbReference>
<comment type="function">
    <text evidence="1">Catalyzes the ferrous insertion into protoporphyrin IX.</text>
</comment>
<comment type="catalytic activity">
    <reaction evidence="1">
        <text>heme b + 2 H(+) = protoporphyrin IX + Fe(2+)</text>
        <dbReference type="Rhea" id="RHEA:22584"/>
        <dbReference type="ChEBI" id="CHEBI:15378"/>
        <dbReference type="ChEBI" id="CHEBI:29033"/>
        <dbReference type="ChEBI" id="CHEBI:57306"/>
        <dbReference type="ChEBI" id="CHEBI:60344"/>
        <dbReference type="EC" id="4.98.1.1"/>
    </reaction>
</comment>
<comment type="pathway">
    <text evidence="1">Porphyrin-containing compound metabolism; protoheme biosynthesis; protoheme from protoporphyrin-IX: step 1/1.</text>
</comment>
<comment type="subcellular location">
    <subcellularLocation>
        <location evidence="1">Cytoplasm</location>
    </subcellularLocation>
</comment>
<comment type="similarity">
    <text evidence="1">Belongs to the ferrochelatase family.</text>
</comment>
<feature type="chain" id="PRO_1000116058" description="Ferrochelatase">
    <location>
        <begin position="1"/>
        <end position="362"/>
    </location>
</feature>
<feature type="binding site" evidence="1">
    <location>
        <position position="212"/>
    </location>
    <ligand>
        <name>Fe cation</name>
        <dbReference type="ChEBI" id="CHEBI:24875"/>
    </ligand>
</feature>
<feature type="binding site" evidence="1">
    <location>
        <position position="294"/>
    </location>
    <ligand>
        <name>Fe cation</name>
        <dbReference type="ChEBI" id="CHEBI:24875"/>
    </ligand>
</feature>
<name>HEMH_LEPBP</name>
<organism>
    <name type="scientific">Leptospira biflexa serovar Patoc (strain Patoc 1 / ATCC 23582 / Paris)</name>
    <dbReference type="NCBI Taxonomy" id="456481"/>
    <lineage>
        <taxon>Bacteria</taxon>
        <taxon>Pseudomonadati</taxon>
        <taxon>Spirochaetota</taxon>
        <taxon>Spirochaetia</taxon>
        <taxon>Leptospirales</taxon>
        <taxon>Leptospiraceae</taxon>
        <taxon>Leptospira</taxon>
    </lineage>
</organism>
<accession>B0SNJ9</accession>
<protein>
    <recommendedName>
        <fullName evidence="1">Ferrochelatase</fullName>
        <ecNumber evidence="1">4.98.1.1</ecNumber>
    </recommendedName>
    <alternativeName>
        <fullName evidence="1">Heme synthase</fullName>
    </alternativeName>
    <alternativeName>
        <fullName evidence="1">Protoheme ferro-lyase</fullName>
    </alternativeName>
</protein>
<proteinExistence type="inferred from homology"/>
<gene>
    <name evidence="1" type="primary">hemH</name>
    <name type="ordered locus">LEPBI_I1164</name>
</gene>
<evidence type="ECO:0000255" key="1">
    <source>
        <dbReference type="HAMAP-Rule" id="MF_00323"/>
    </source>
</evidence>
<keyword id="KW-0963">Cytoplasm</keyword>
<keyword id="KW-0350">Heme biosynthesis</keyword>
<keyword id="KW-0408">Iron</keyword>
<keyword id="KW-0456">Lyase</keyword>
<keyword id="KW-0479">Metal-binding</keyword>
<keyword id="KW-0627">Porphyrin biosynthesis</keyword>
<keyword id="KW-1185">Reference proteome</keyword>
<reference key="1">
    <citation type="journal article" date="2008" name="PLoS ONE">
        <title>Genome sequence of the saprophyte Leptospira biflexa provides insights into the evolution of Leptospira and the pathogenesis of leptospirosis.</title>
        <authorList>
            <person name="Picardeau M."/>
            <person name="Bulach D.M."/>
            <person name="Bouchier C."/>
            <person name="Zuerner R.L."/>
            <person name="Zidane N."/>
            <person name="Wilson P.J."/>
            <person name="Creno S."/>
            <person name="Kuczek E.S."/>
            <person name="Bommezzadri S."/>
            <person name="Davis J.C."/>
            <person name="McGrath A."/>
            <person name="Johnson M.J."/>
            <person name="Boursaux-Eude C."/>
            <person name="Seemann T."/>
            <person name="Rouy Z."/>
            <person name="Coppel R.L."/>
            <person name="Rood J.I."/>
            <person name="Lajus A."/>
            <person name="Davies J.K."/>
            <person name="Medigue C."/>
            <person name="Adler B."/>
        </authorList>
    </citation>
    <scope>NUCLEOTIDE SEQUENCE [LARGE SCALE GENOMIC DNA]</scope>
    <source>
        <strain>Patoc 1 / ATCC 23582 / Paris</strain>
    </source>
</reference>